<organism>
    <name type="scientific">Uncinocarpus reesii (strain UAMH 1704)</name>
    <dbReference type="NCBI Taxonomy" id="336963"/>
    <lineage>
        <taxon>Eukaryota</taxon>
        <taxon>Fungi</taxon>
        <taxon>Dikarya</taxon>
        <taxon>Ascomycota</taxon>
        <taxon>Pezizomycotina</taxon>
        <taxon>Eurotiomycetes</taxon>
        <taxon>Eurotiomycetidae</taxon>
        <taxon>Onygenales</taxon>
        <taxon>Onygenaceae</taxon>
        <taxon>Uncinocarpus</taxon>
    </lineage>
</organism>
<evidence type="ECO:0000255" key="1">
    <source>
        <dbReference type="HAMAP-Rule" id="MF_03115"/>
    </source>
</evidence>
<accession>C4JTA0</accession>
<feature type="chain" id="PRO_0000392409" description="Fe-S cluster assembly protein DRE2">
    <location>
        <begin position="1"/>
        <end position="317"/>
    </location>
</feature>
<feature type="region of interest" description="N-terminal SAM-like domain" evidence="1">
    <location>
        <begin position="1"/>
        <end position="131"/>
    </location>
</feature>
<feature type="region of interest" description="Linker" evidence="1">
    <location>
        <begin position="132"/>
        <end position="209"/>
    </location>
</feature>
<feature type="region of interest" description="Fe-S binding site A" evidence="1">
    <location>
        <begin position="219"/>
        <end position="235"/>
    </location>
</feature>
<feature type="region of interest" description="Fe-S binding site B" evidence="1">
    <location>
        <begin position="280"/>
        <end position="294"/>
    </location>
</feature>
<feature type="short sequence motif" description="Cx2C motif 1" evidence="1">
    <location>
        <begin position="280"/>
        <end position="283"/>
    </location>
</feature>
<feature type="short sequence motif" description="Cx2C motif 2" evidence="1">
    <location>
        <begin position="291"/>
        <end position="294"/>
    </location>
</feature>
<feature type="binding site" evidence="1">
    <location>
        <position position="219"/>
    </location>
    <ligand>
        <name>[2Fe-2S] cluster</name>
        <dbReference type="ChEBI" id="CHEBI:190135"/>
    </ligand>
</feature>
<feature type="binding site" evidence="1">
    <location>
        <position position="230"/>
    </location>
    <ligand>
        <name>[2Fe-2S] cluster</name>
        <dbReference type="ChEBI" id="CHEBI:190135"/>
    </ligand>
</feature>
<feature type="binding site" evidence="1">
    <location>
        <position position="233"/>
    </location>
    <ligand>
        <name>[2Fe-2S] cluster</name>
        <dbReference type="ChEBI" id="CHEBI:190135"/>
    </ligand>
</feature>
<feature type="binding site" evidence="1">
    <location>
        <position position="235"/>
    </location>
    <ligand>
        <name>[2Fe-2S] cluster</name>
        <dbReference type="ChEBI" id="CHEBI:190135"/>
    </ligand>
</feature>
<feature type="binding site" evidence="1">
    <location>
        <position position="280"/>
    </location>
    <ligand>
        <name>[4Fe-4S] cluster</name>
        <dbReference type="ChEBI" id="CHEBI:49883"/>
    </ligand>
</feature>
<feature type="binding site" evidence="1">
    <location>
        <position position="283"/>
    </location>
    <ligand>
        <name>[4Fe-4S] cluster</name>
        <dbReference type="ChEBI" id="CHEBI:49883"/>
    </ligand>
</feature>
<feature type="binding site" evidence="1">
    <location>
        <position position="291"/>
    </location>
    <ligand>
        <name>[4Fe-4S] cluster</name>
        <dbReference type="ChEBI" id="CHEBI:49883"/>
    </ligand>
</feature>
<feature type="binding site" evidence="1">
    <location>
        <position position="294"/>
    </location>
    <ligand>
        <name>[4Fe-4S] cluster</name>
        <dbReference type="ChEBI" id="CHEBI:49883"/>
    </ligand>
</feature>
<proteinExistence type="inferred from homology"/>
<name>DRE2_UNCRE</name>
<sequence length="317" mass="34006">MERMLFLSPPSLAAHPEKLSTILSAHAQYSTELQMLDRLAAGLVSLPESTYDIVMFLIDADCLKTGSTPRMSRGVIESIVRALRPGGKLKSEHGLFASPDYPDRTELVLAGLVFDDNGDLVKPNFGAQDTVPLKLGKKKKATPAASSGDGAEANGVTVNMPIATDSKRNGQGAAVQGLGFVDFSDDLDLPPEDDDELIDEEALMDEEDMGRPIVQPPECRPKAGKRRRACKDCTCGLAERLHEEDTAKRANADAALETLKLGSNDLAEVDFTVQGKMGSCGNCALGDAFRCDGCPYIGLPPFKPGEEVRLLSNDVQL</sequence>
<gene>
    <name evidence="1" type="primary">DRE2</name>
    <name type="ORF">UREG_05689</name>
</gene>
<dbReference type="EMBL" id="CH476617">
    <property type="protein sequence ID" value="EEP80847.1"/>
    <property type="molecule type" value="Genomic_DNA"/>
</dbReference>
<dbReference type="RefSeq" id="XP_002585000.1">
    <property type="nucleotide sequence ID" value="XM_002584954.1"/>
</dbReference>
<dbReference type="STRING" id="336963.C4JTA0"/>
<dbReference type="GeneID" id="8439327"/>
<dbReference type="KEGG" id="ure:UREG_05689"/>
<dbReference type="VEuPathDB" id="FungiDB:UREG_05689"/>
<dbReference type="eggNOG" id="KOG4020">
    <property type="taxonomic scope" value="Eukaryota"/>
</dbReference>
<dbReference type="HOGENOM" id="CLU_067152_1_0_1"/>
<dbReference type="InParanoid" id="C4JTA0"/>
<dbReference type="OMA" id="DFVMPVT"/>
<dbReference type="OrthoDB" id="311633at2759"/>
<dbReference type="Proteomes" id="UP000002058">
    <property type="component" value="Unassembled WGS sequence"/>
</dbReference>
<dbReference type="GO" id="GO:0005758">
    <property type="term" value="C:mitochondrial intermembrane space"/>
    <property type="evidence" value="ECO:0007669"/>
    <property type="project" value="UniProtKB-SubCell"/>
</dbReference>
<dbReference type="GO" id="GO:0051537">
    <property type="term" value="F:2 iron, 2 sulfur cluster binding"/>
    <property type="evidence" value="ECO:0007669"/>
    <property type="project" value="UniProtKB-UniRule"/>
</dbReference>
<dbReference type="GO" id="GO:0051539">
    <property type="term" value="F:4 iron, 4 sulfur cluster binding"/>
    <property type="evidence" value="ECO:0007669"/>
    <property type="project" value="UniProtKB-KW"/>
</dbReference>
<dbReference type="GO" id="GO:0009055">
    <property type="term" value="F:electron transfer activity"/>
    <property type="evidence" value="ECO:0007669"/>
    <property type="project" value="UniProtKB-UniRule"/>
</dbReference>
<dbReference type="GO" id="GO:0046872">
    <property type="term" value="F:metal ion binding"/>
    <property type="evidence" value="ECO:0007669"/>
    <property type="project" value="UniProtKB-KW"/>
</dbReference>
<dbReference type="GO" id="GO:0016226">
    <property type="term" value="P:iron-sulfur cluster assembly"/>
    <property type="evidence" value="ECO:0007669"/>
    <property type="project" value="UniProtKB-UniRule"/>
</dbReference>
<dbReference type="Gene3D" id="3.40.50.11000">
    <property type="entry name" value="Fe-S cluster assembly protein Dre2, N-terminal domain"/>
    <property type="match status" value="1"/>
</dbReference>
<dbReference type="HAMAP" id="MF_03115">
    <property type="entry name" value="Anamorsin"/>
    <property type="match status" value="1"/>
</dbReference>
<dbReference type="InterPro" id="IPR007785">
    <property type="entry name" value="Anamorsin"/>
</dbReference>
<dbReference type="InterPro" id="IPR046408">
    <property type="entry name" value="CIAPIN1"/>
</dbReference>
<dbReference type="InterPro" id="IPR031838">
    <property type="entry name" value="Dre2_N"/>
</dbReference>
<dbReference type="PANTHER" id="PTHR13273">
    <property type="entry name" value="ANAMORSIN"/>
    <property type="match status" value="1"/>
</dbReference>
<dbReference type="PANTHER" id="PTHR13273:SF14">
    <property type="entry name" value="ANAMORSIN"/>
    <property type="match status" value="1"/>
</dbReference>
<dbReference type="Pfam" id="PF05093">
    <property type="entry name" value="CIAPIN1"/>
    <property type="match status" value="1"/>
</dbReference>
<dbReference type="Pfam" id="PF16803">
    <property type="entry name" value="DRE2_N"/>
    <property type="match status" value="1"/>
</dbReference>
<comment type="function">
    <text evidence="1">Component of the cytosolic iron-sulfur (Fe-S) protein assembly (CIA) machinery required for the maturation of extramitochondrial Fe-S proteins. Part of an electron transfer chain functioning in an early step of cytosolic Fe-S biogenesis, facilitating the de novo assembly of a [4Fe-4S] cluster on the scaffold complex CFD1-NBP35. Electrons are transferred to DRE2 from NADPH via the FAD- and FMN-containing protein TAH18. TAH18-DRE2 are also required for the assembly of the diferric tyrosyl radical cofactor of ribonucleotide reductase (RNR), probably by providing electrons for reduction during radical cofactor maturation in the catalytic small subunit RNR2.</text>
</comment>
<comment type="cofactor">
    <cofactor evidence="1">
        <name>[2Fe-2S] cluster</name>
        <dbReference type="ChEBI" id="CHEBI:190135"/>
    </cofactor>
</comment>
<comment type="cofactor">
    <cofactor evidence="1">
        <name>[4Fe-4S] cluster</name>
        <dbReference type="ChEBI" id="CHEBI:49883"/>
    </cofactor>
</comment>
<comment type="subunit">
    <text evidence="1">Monomer. Interacts with TAH18. Interacts with MIA40.</text>
</comment>
<comment type="subcellular location">
    <subcellularLocation>
        <location evidence="1">Cytoplasm</location>
    </subcellularLocation>
    <subcellularLocation>
        <location evidence="1">Mitochondrion intermembrane space</location>
    </subcellularLocation>
</comment>
<comment type="domain">
    <text evidence="1">The C-terminal domain binds 2 Fe-S clusters but is otherwise mostly in an intrinsically disordered conformation.</text>
</comment>
<comment type="domain">
    <text evidence="1">The N-terminal domain has structural similarity with S-adenosyl-L-methionine-dependent methyltransferases, but does not bind S-adenosyl-L-methionine. It is required for correct assembly of the 2 Fe-S clusters.</text>
</comment>
<comment type="domain">
    <text evidence="1">The twin Cx2C motifs are involved in the recognition by the mitochondrial MIA40-ERV1 disulfide relay system. The formation of 2 disulfide bonds in the Cx2C motifs through dithiol/disulfide exchange reactions effectively traps the protein in the mitochondrial intermembrane space.</text>
</comment>
<comment type="similarity">
    <text evidence="1">Belongs to the anamorsin family.</text>
</comment>
<keyword id="KW-0001">2Fe-2S</keyword>
<keyword id="KW-0004">4Fe-4S</keyword>
<keyword id="KW-0963">Cytoplasm</keyword>
<keyword id="KW-0408">Iron</keyword>
<keyword id="KW-0411">Iron-sulfur</keyword>
<keyword id="KW-0479">Metal-binding</keyword>
<keyword id="KW-0496">Mitochondrion</keyword>
<keyword id="KW-1185">Reference proteome</keyword>
<protein>
    <recommendedName>
        <fullName evidence="1">Fe-S cluster assembly protein DRE2</fullName>
    </recommendedName>
    <alternativeName>
        <fullName evidence="1">Anamorsin homolog</fullName>
    </alternativeName>
</protein>
<reference key="1">
    <citation type="journal article" date="2009" name="Genome Res.">
        <title>Comparative genomic analyses of the human fungal pathogens Coccidioides and their relatives.</title>
        <authorList>
            <person name="Sharpton T.J."/>
            <person name="Stajich J.E."/>
            <person name="Rounsley S.D."/>
            <person name="Gardner M.J."/>
            <person name="Wortman J.R."/>
            <person name="Jordar V.S."/>
            <person name="Maiti R."/>
            <person name="Kodira C.D."/>
            <person name="Neafsey D.E."/>
            <person name="Zeng Q."/>
            <person name="Hung C.-Y."/>
            <person name="McMahan C."/>
            <person name="Muszewska A."/>
            <person name="Grynberg M."/>
            <person name="Mandel M.A."/>
            <person name="Kellner E.M."/>
            <person name="Barker B.M."/>
            <person name="Galgiani J.N."/>
            <person name="Orbach M.J."/>
            <person name="Kirkland T.N."/>
            <person name="Cole G.T."/>
            <person name="Henn M.R."/>
            <person name="Birren B.W."/>
            <person name="Taylor J.W."/>
        </authorList>
    </citation>
    <scope>NUCLEOTIDE SEQUENCE [LARGE SCALE GENOMIC DNA]</scope>
    <source>
        <strain>UAMH 1704</strain>
    </source>
</reference>